<proteinExistence type="evidence at protein level"/>
<evidence type="ECO:0000255" key="1">
    <source>
        <dbReference type="HAMAP-Rule" id="MF_00692"/>
    </source>
</evidence>
<evidence type="ECO:0000269" key="2">
    <source>
    </source>
</evidence>
<evidence type="ECO:0000303" key="3">
    <source>
    </source>
</evidence>
<evidence type="ECO:0000305" key="4"/>
<evidence type="ECO:0000305" key="5">
    <source>
    </source>
</evidence>
<evidence type="ECO:0007744" key="6">
    <source>
        <dbReference type="PDB" id="6EAC"/>
    </source>
</evidence>
<evidence type="ECO:0007829" key="7">
    <source>
        <dbReference type="PDB" id="6EAC"/>
    </source>
</evidence>
<feature type="chain" id="PRO_0000121422" description="Protein nucleotidyltransferase YdiU">
    <location>
        <begin position="1"/>
        <end position="487"/>
    </location>
</feature>
<feature type="active site" description="Proton acceptor" evidence="5">
    <location>
        <position position="252"/>
    </location>
</feature>
<feature type="binding site" evidence="5 6">
    <location>
        <position position="90"/>
    </location>
    <ligand>
        <name>ATP</name>
        <dbReference type="ChEBI" id="CHEBI:30616"/>
    </ligand>
</feature>
<feature type="binding site" evidence="5 6">
    <location>
        <position position="92"/>
    </location>
    <ligand>
        <name>ATP</name>
        <dbReference type="ChEBI" id="CHEBI:30616"/>
    </ligand>
</feature>
<feature type="binding site" evidence="5 6">
    <location>
        <position position="93"/>
    </location>
    <ligand>
        <name>ATP</name>
        <dbReference type="ChEBI" id="CHEBI:30616"/>
    </ligand>
</feature>
<feature type="binding site" evidence="5 6">
    <location>
        <position position="113"/>
    </location>
    <ligand>
        <name>ATP</name>
        <dbReference type="ChEBI" id="CHEBI:30616"/>
    </ligand>
</feature>
<feature type="binding site" evidence="5 6">
    <location>
        <position position="125"/>
    </location>
    <ligand>
        <name>ATP</name>
        <dbReference type="ChEBI" id="CHEBI:30616"/>
    </ligand>
</feature>
<feature type="binding site" evidence="5 6">
    <location>
        <position position="126"/>
    </location>
    <ligand>
        <name>ATP</name>
        <dbReference type="ChEBI" id="CHEBI:30616"/>
    </ligand>
</feature>
<feature type="binding site" evidence="5 6">
    <location>
        <position position="176"/>
    </location>
    <ligand>
        <name>ATP</name>
        <dbReference type="ChEBI" id="CHEBI:30616"/>
    </ligand>
</feature>
<feature type="binding site" evidence="5 6">
    <location>
        <position position="183"/>
    </location>
    <ligand>
        <name>ATP</name>
        <dbReference type="ChEBI" id="CHEBI:30616"/>
    </ligand>
</feature>
<feature type="binding site" evidence="2 6">
    <location>
        <position position="253"/>
    </location>
    <ligand>
        <name>Mg(2+)</name>
        <dbReference type="ChEBI" id="CHEBI:18420"/>
    </ligand>
</feature>
<feature type="binding site" evidence="5 6">
    <location>
        <position position="262"/>
    </location>
    <ligand>
        <name>ATP</name>
        <dbReference type="ChEBI" id="CHEBI:30616"/>
    </ligand>
</feature>
<feature type="binding site" evidence="2 6">
    <location>
        <position position="262"/>
    </location>
    <ligand>
        <name>Mg(2+)</name>
        <dbReference type="ChEBI" id="CHEBI:18420"/>
    </ligand>
</feature>
<feature type="helix" evidence="7">
    <location>
        <begin position="4"/>
        <end position="6"/>
    </location>
</feature>
<feature type="helix" evidence="7">
    <location>
        <begin position="13"/>
        <end position="16"/>
    </location>
</feature>
<feature type="turn" evidence="7">
    <location>
        <begin position="18"/>
        <end position="20"/>
    </location>
</feature>
<feature type="strand" evidence="7">
    <location>
        <begin position="21"/>
        <end position="23"/>
    </location>
</feature>
<feature type="strand" evidence="7">
    <location>
        <begin position="33"/>
        <end position="37"/>
    </location>
</feature>
<feature type="helix" evidence="7">
    <location>
        <begin position="39"/>
        <end position="43"/>
    </location>
</feature>
<feature type="turn" evidence="7">
    <location>
        <begin position="44"/>
        <end position="46"/>
    </location>
</feature>
<feature type="helix" evidence="7">
    <location>
        <begin position="49"/>
        <end position="53"/>
    </location>
</feature>
<feature type="helix" evidence="7">
    <location>
        <begin position="55"/>
        <end position="60"/>
    </location>
</feature>
<feature type="turn" evidence="7">
    <location>
        <begin position="61"/>
        <end position="63"/>
    </location>
</feature>
<feature type="strand" evidence="7">
    <location>
        <begin position="73"/>
        <end position="75"/>
    </location>
</feature>
<feature type="strand" evidence="7">
    <location>
        <begin position="79"/>
        <end position="81"/>
    </location>
</feature>
<feature type="strand" evidence="7">
    <location>
        <begin position="84"/>
        <end position="87"/>
    </location>
</feature>
<feature type="strand" evidence="7">
    <location>
        <begin position="92"/>
        <end position="101"/>
    </location>
</feature>
<feature type="strand" evidence="7">
    <location>
        <begin position="107"/>
        <end position="113"/>
    </location>
</feature>
<feature type="helix" evidence="7">
    <location>
        <begin position="130"/>
        <end position="146"/>
    </location>
</feature>
<feature type="strand" evidence="7">
    <location>
        <begin position="152"/>
        <end position="158"/>
    </location>
</feature>
<feature type="strand" evidence="7">
    <location>
        <begin position="162"/>
        <end position="179"/>
    </location>
</feature>
<feature type="helix" evidence="7">
    <location>
        <begin position="184"/>
        <end position="192"/>
    </location>
</feature>
<feature type="helix" evidence="7">
    <location>
        <begin position="196"/>
        <end position="210"/>
    </location>
</feature>
<feature type="helix" evidence="7">
    <location>
        <begin position="212"/>
        <end position="216"/>
    </location>
</feature>
<feature type="strand" evidence="7">
    <location>
        <begin position="217"/>
        <end position="219"/>
    </location>
</feature>
<feature type="helix" evidence="7">
    <location>
        <begin position="220"/>
        <end position="242"/>
    </location>
</feature>
<feature type="helix" evidence="7">
    <location>
        <begin position="251"/>
        <end position="253"/>
    </location>
</feature>
<feature type="turn" evidence="7">
    <location>
        <begin position="289"/>
        <end position="291"/>
    </location>
</feature>
<feature type="helix" evidence="7">
    <location>
        <begin position="292"/>
        <end position="306"/>
    </location>
</feature>
<feature type="turn" evidence="7">
    <location>
        <begin position="307"/>
        <end position="310"/>
    </location>
</feature>
<feature type="helix" evidence="7">
    <location>
        <begin position="313"/>
        <end position="320"/>
    </location>
</feature>
<feature type="helix" evidence="7">
    <location>
        <begin position="323"/>
        <end position="338"/>
    </location>
</feature>
<feature type="helix" evidence="7">
    <location>
        <begin position="348"/>
        <end position="360"/>
    </location>
</feature>
<feature type="turn" evidence="7">
    <location>
        <begin position="361"/>
        <end position="363"/>
    </location>
</feature>
<feature type="helix" evidence="7">
    <location>
        <begin position="366"/>
        <end position="375"/>
    </location>
</feature>
<feature type="helix" evidence="7">
    <location>
        <begin position="378"/>
        <end position="385"/>
    </location>
</feature>
<feature type="helix" evidence="7">
    <location>
        <begin position="386"/>
        <end position="388"/>
    </location>
</feature>
<feature type="helix" evidence="7">
    <location>
        <begin position="392"/>
        <end position="407"/>
    </location>
</feature>
<feature type="helix" evidence="7">
    <location>
        <begin position="414"/>
        <end position="422"/>
    </location>
</feature>
<feature type="helix" evidence="7">
    <location>
        <begin position="432"/>
        <end position="443"/>
    </location>
</feature>
<feature type="helix" evidence="7">
    <location>
        <begin position="448"/>
        <end position="458"/>
    </location>
</feature>
<feature type="helix" evidence="7">
    <location>
        <begin position="468"/>
        <end position="471"/>
    </location>
</feature>
<reference key="1">
    <citation type="journal article" date="2003" name="Proc. Natl. Acad. Sci. U.S.A.">
        <title>The complete genome sequence of the Arabidopsis and tomato pathogen Pseudomonas syringae pv. tomato DC3000.</title>
        <authorList>
            <person name="Buell C.R."/>
            <person name="Joardar V."/>
            <person name="Lindeberg M."/>
            <person name="Selengut J."/>
            <person name="Paulsen I.T."/>
            <person name="Gwinn M.L."/>
            <person name="Dodson R.J."/>
            <person name="DeBoy R.T."/>
            <person name="Durkin A.S."/>
            <person name="Kolonay J.F."/>
            <person name="Madupu R."/>
            <person name="Daugherty S.C."/>
            <person name="Brinkac L.M."/>
            <person name="Beanan M.J."/>
            <person name="Haft D.H."/>
            <person name="Nelson W.C."/>
            <person name="Davidsen T.M."/>
            <person name="Zafar N."/>
            <person name="Zhou L."/>
            <person name="Liu J."/>
            <person name="Yuan Q."/>
            <person name="Khouri H.M."/>
            <person name="Fedorova N.B."/>
            <person name="Tran B."/>
            <person name="Russell D."/>
            <person name="Berry K.J."/>
            <person name="Utterback T.R."/>
            <person name="Van Aken S.E."/>
            <person name="Feldblyum T.V."/>
            <person name="D'Ascenzo M."/>
            <person name="Deng W.-L."/>
            <person name="Ramos A.R."/>
            <person name="Alfano J.R."/>
            <person name="Cartinhour S."/>
            <person name="Chatterjee A.K."/>
            <person name="Delaney T.P."/>
            <person name="Lazarowitz S.G."/>
            <person name="Martin G.B."/>
            <person name="Schneider D.J."/>
            <person name="Tang X."/>
            <person name="Bender C.L."/>
            <person name="White O."/>
            <person name="Fraser C.M."/>
            <person name="Collmer A."/>
        </authorList>
    </citation>
    <scope>NUCLEOTIDE SEQUENCE [LARGE SCALE GENOMIC DNA]</scope>
    <source>
        <strain>ATCC BAA-871 / DC3000</strain>
    </source>
</reference>
<reference evidence="6" key="2">
    <citation type="journal article" date="2018" name="Cell">
        <title>Protein AMPylation by an Evolutionarily Conserved Pseudokinase.</title>
        <authorList>
            <person name="Sreelatha A."/>
            <person name="Yee S.S."/>
            <person name="Lopez V.A."/>
            <person name="Park B.C."/>
            <person name="Kinch L.N."/>
            <person name="Pilch S."/>
            <person name="Servage K.A."/>
            <person name="Zhang J."/>
            <person name="Jiou J."/>
            <person name="Karasiewicz-Urbanska M."/>
            <person name="Lobocka M."/>
            <person name="Grishin N.V."/>
            <person name="Orth K."/>
            <person name="Kucharczyk R."/>
            <person name="Pawlowski K."/>
            <person name="Tomchick D.R."/>
            <person name="Tagliabracci V.S."/>
        </authorList>
    </citation>
    <scope>X-RAY CRYSTALLOGRAPHY (2.27 ANGSTROMS) IN COMPLEX WITH ATP ANALOG AND MAGNESIUM</scope>
    <scope>DOMAIN</scope>
    <scope>ACTIVE SITE</scope>
</reference>
<gene>
    <name evidence="1" type="primary">ydiU</name>
    <name evidence="3" type="synonym">selO</name>
    <name type="ordered locus">PSPTO_5028</name>
</gene>
<name>SELO_PSESM</name>
<sequence length="487" mass="55208">MKALDELVFDNRFARLGDAFSTHVLPEPIDAPRLVVASESALALLDLAPEQSELPLFAEIFSGHKLWAEAEPRAMVYSGHQFGSYNPRLGDGRGLLLGEVYNDAGEHWDLHLKGAGRTPYSRMGDGRAVLRSSIREFLASEALHALGIPSSRAACVVSSNTPVWREKQEYAAMVLRLAQSHVRFGSLEYLFYTKQPEHLKTLAEHVLTMHYPHCQEQPEPYLAMFREIVERNAELIAKWQAYGFCHGVMNTDNMSILGITFDFGPFAFLDDFDEHFICNHSDHEGRYSFSNQVPIAQWNLSALGQALTPFVSVEALRETIGLFLPLYQAHYLDLMRRRLGLTVAQDQDDKLVSQLLQLMQNSGVDYTLFFRRLGDQPAAQALRALRDDFVDIKVFDDWAQAYQARIAAEENGTEQARKERMHAVNPLYILRNYLAQNAIEAAEKGDYEEVRRLHQVLCTPFTEQPGMEGYAQRPPDWGKHLEISCSS</sequence>
<accession>Q87VB1</accession>
<protein>
    <recommendedName>
        <fullName evidence="1">Protein nucleotidyltransferase YdiU</fullName>
        <ecNumber evidence="1">2.7.7.-</ecNumber>
    </recommendedName>
    <alternativeName>
        <fullName evidence="1">Protein adenylyltransferase YdiU</fullName>
        <ecNumber evidence="1">2.7.7.108</ecNumber>
    </alternativeName>
    <alternativeName>
        <fullName evidence="1">Protein uridylyltransferase YdiU</fullName>
        <ecNumber evidence="1">2.7.7.-</ecNumber>
    </alternativeName>
</protein>
<organism>
    <name type="scientific">Pseudomonas syringae pv. tomato (strain ATCC BAA-871 / DC3000)</name>
    <dbReference type="NCBI Taxonomy" id="223283"/>
    <lineage>
        <taxon>Bacteria</taxon>
        <taxon>Pseudomonadati</taxon>
        <taxon>Pseudomonadota</taxon>
        <taxon>Gammaproteobacteria</taxon>
        <taxon>Pseudomonadales</taxon>
        <taxon>Pseudomonadaceae</taxon>
        <taxon>Pseudomonas</taxon>
    </lineage>
</organism>
<keyword id="KW-0002">3D-structure</keyword>
<keyword id="KW-0067">ATP-binding</keyword>
<keyword id="KW-0460">Magnesium</keyword>
<keyword id="KW-0464">Manganese</keyword>
<keyword id="KW-0479">Metal-binding</keyword>
<keyword id="KW-0547">Nucleotide-binding</keyword>
<keyword id="KW-0548">Nucleotidyltransferase</keyword>
<keyword id="KW-1185">Reference proteome</keyword>
<keyword id="KW-0808">Transferase</keyword>
<comment type="function">
    <text evidence="1">Nucleotidyltransferase involved in the post-translational modification of proteins. It can catalyze the addition of adenosine monophosphate (AMP) or uridine monophosphate (UMP) to a protein, resulting in modifications known as AMPylation and UMPylation.</text>
</comment>
<comment type="catalytic activity">
    <reaction evidence="1">
        <text>L-seryl-[protein] + ATP = 3-O-(5'-adenylyl)-L-seryl-[protein] + diphosphate</text>
        <dbReference type="Rhea" id="RHEA:58120"/>
        <dbReference type="Rhea" id="RHEA-COMP:9863"/>
        <dbReference type="Rhea" id="RHEA-COMP:15073"/>
        <dbReference type="ChEBI" id="CHEBI:29999"/>
        <dbReference type="ChEBI" id="CHEBI:30616"/>
        <dbReference type="ChEBI" id="CHEBI:33019"/>
        <dbReference type="ChEBI" id="CHEBI:142516"/>
        <dbReference type="EC" id="2.7.7.108"/>
    </reaction>
</comment>
<comment type="catalytic activity">
    <reaction evidence="1">
        <text>L-threonyl-[protein] + ATP = 3-O-(5'-adenylyl)-L-threonyl-[protein] + diphosphate</text>
        <dbReference type="Rhea" id="RHEA:54292"/>
        <dbReference type="Rhea" id="RHEA-COMP:11060"/>
        <dbReference type="Rhea" id="RHEA-COMP:13847"/>
        <dbReference type="ChEBI" id="CHEBI:30013"/>
        <dbReference type="ChEBI" id="CHEBI:30616"/>
        <dbReference type="ChEBI" id="CHEBI:33019"/>
        <dbReference type="ChEBI" id="CHEBI:138113"/>
        <dbReference type="EC" id="2.7.7.108"/>
    </reaction>
</comment>
<comment type="catalytic activity">
    <reaction evidence="1">
        <text>L-tyrosyl-[protein] + ATP = O-(5'-adenylyl)-L-tyrosyl-[protein] + diphosphate</text>
        <dbReference type="Rhea" id="RHEA:54288"/>
        <dbReference type="Rhea" id="RHEA-COMP:10136"/>
        <dbReference type="Rhea" id="RHEA-COMP:13846"/>
        <dbReference type="ChEBI" id="CHEBI:30616"/>
        <dbReference type="ChEBI" id="CHEBI:33019"/>
        <dbReference type="ChEBI" id="CHEBI:46858"/>
        <dbReference type="ChEBI" id="CHEBI:83624"/>
        <dbReference type="EC" id="2.7.7.108"/>
    </reaction>
</comment>
<comment type="catalytic activity">
    <reaction evidence="1">
        <text>L-histidyl-[protein] + UTP = N(tele)-(5'-uridylyl)-L-histidyl-[protein] + diphosphate</text>
        <dbReference type="Rhea" id="RHEA:83891"/>
        <dbReference type="Rhea" id="RHEA-COMP:9745"/>
        <dbReference type="Rhea" id="RHEA-COMP:20239"/>
        <dbReference type="ChEBI" id="CHEBI:29979"/>
        <dbReference type="ChEBI" id="CHEBI:33019"/>
        <dbReference type="ChEBI" id="CHEBI:46398"/>
        <dbReference type="ChEBI" id="CHEBI:233474"/>
    </reaction>
</comment>
<comment type="catalytic activity">
    <reaction evidence="1">
        <text>L-seryl-[protein] + UTP = O-(5'-uridylyl)-L-seryl-[protein] + diphosphate</text>
        <dbReference type="Rhea" id="RHEA:64604"/>
        <dbReference type="Rhea" id="RHEA-COMP:9863"/>
        <dbReference type="Rhea" id="RHEA-COMP:16635"/>
        <dbReference type="ChEBI" id="CHEBI:29999"/>
        <dbReference type="ChEBI" id="CHEBI:33019"/>
        <dbReference type="ChEBI" id="CHEBI:46398"/>
        <dbReference type="ChEBI" id="CHEBI:156051"/>
    </reaction>
</comment>
<comment type="catalytic activity">
    <reaction evidence="1">
        <text>L-tyrosyl-[protein] + UTP = O-(5'-uridylyl)-L-tyrosyl-[protein] + diphosphate</text>
        <dbReference type="Rhea" id="RHEA:83887"/>
        <dbReference type="Rhea" id="RHEA-COMP:10136"/>
        <dbReference type="Rhea" id="RHEA-COMP:20238"/>
        <dbReference type="ChEBI" id="CHEBI:33019"/>
        <dbReference type="ChEBI" id="CHEBI:46398"/>
        <dbReference type="ChEBI" id="CHEBI:46858"/>
        <dbReference type="ChEBI" id="CHEBI:90602"/>
    </reaction>
</comment>
<comment type="cofactor">
    <cofactor evidence="1 2">
        <name>Mg(2+)</name>
        <dbReference type="ChEBI" id="CHEBI:18420"/>
    </cofactor>
    <cofactor evidence="1">
        <name>Mn(2+)</name>
        <dbReference type="ChEBI" id="CHEBI:29035"/>
    </cofactor>
</comment>
<comment type="domain">
    <text evidence="2">The AMP-PNP molecule (an ATP analog) is flipped in the active site when compared to canonical protein kinases.</text>
</comment>
<comment type="similarity">
    <text evidence="1 4">Belongs to the SELO family.</text>
</comment>
<dbReference type="EC" id="2.7.7.-" evidence="1"/>
<dbReference type="EC" id="2.7.7.108" evidence="1"/>
<dbReference type="EMBL" id="AE016853">
    <property type="protein sequence ID" value="AAO58456.1"/>
    <property type="molecule type" value="Genomic_DNA"/>
</dbReference>
<dbReference type="RefSeq" id="NP_794761.1">
    <property type="nucleotide sequence ID" value="NC_004578.1"/>
</dbReference>
<dbReference type="RefSeq" id="WP_011105279.1">
    <property type="nucleotide sequence ID" value="NC_004578.1"/>
</dbReference>
<dbReference type="PDB" id="6EAC">
    <property type="method" value="X-ray"/>
    <property type="resolution" value="2.27 A"/>
    <property type="chains" value="A/B/C/D=1-487"/>
</dbReference>
<dbReference type="PDBsum" id="6EAC"/>
<dbReference type="SMR" id="Q87VB1"/>
<dbReference type="STRING" id="223283.PSPTO_5028"/>
<dbReference type="GeneID" id="1186713"/>
<dbReference type="KEGG" id="pst:PSPTO_5028"/>
<dbReference type="PATRIC" id="fig|223283.9.peg.5147"/>
<dbReference type="eggNOG" id="COG0397">
    <property type="taxonomic scope" value="Bacteria"/>
</dbReference>
<dbReference type="HOGENOM" id="CLU_010245_4_1_6"/>
<dbReference type="OrthoDB" id="9776281at2"/>
<dbReference type="PhylomeDB" id="Q87VB1"/>
<dbReference type="Proteomes" id="UP000002515">
    <property type="component" value="Chromosome"/>
</dbReference>
<dbReference type="GO" id="GO:0070733">
    <property type="term" value="F:AMPylase activity"/>
    <property type="evidence" value="ECO:0007669"/>
    <property type="project" value="TreeGrafter"/>
</dbReference>
<dbReference type="GO" id="GO:0005524">
    <property type="term" value="F:ATP binding"/>
    <property type="evidence" value="ECO:0007669"/>
    <property type="project" value="UniProtKB-UniRule"/>
</dbReference>
<dbReference type="GO" id="GO:0000287">
    <property type="term" value="F:magnesium ion binding"/>
    <property type="evidence" value="ECO:0007669"/>
    <property type="project" value="UniProtKB-UniRule"/>
</dbReference>
<dbReference type="HAMAP" id="MF_00692">
    <property type="entry name" value="YdiU_SelO"/>
    <property type="match status" value="1"/>
</dbReference>
<dbReference type="InterPro" id="IPR003846">
    <property type="entry name" value="SelO"/>
</dbReference>
<dbReference type="NCBIfam" id="NF000658">
    <property type="entry name" value="PRK00029.1"/>
    <property type="match status" value="1"/>
</dbReference>
<dbReference type="NCBIfam" id="NF045949">
    <property type="entry name" value="PrtAdtaseSelOPseudom"/>
    <property type="match status" value="1"/>
</dbReference>
<dbReference type="PANTHER" id="PTHR32057">
    <property type="entry name" value="PROTEIN ADENYLYLTRANSFERASE SELO, MITOCHONDRIAL"/>
    <property type="match status" value="1"/>
</dbReference>
<dbReference type="PANTHER" id="PTHR32057:SF14">
    <property type="entry name" value="PROTEIN ADENYLYLTRANSFERASE SELO, MITOCHONDRIAL"/>
    <property type="match status" value="1"/>
</dbReference>
<dbReference type="Pfam" id="PF02696">
    <property type="entry name" value="SelO"/>
    <property type="match status" value="1"/>
</dbReference>